<dbReference type="EC" id="2.7.1.-" evidence="1"/>
<dbReference type="EMBL" id="CP000247">
    <property type="protein sequence ID" value="ABG70126.1"/>
    <property type="molecule type" value="Genomic_DNA"/>
</dbReference>
<dbReference type="RefSeq" id="WP_000807341.1">
    <property type="nucleotide sequence ID" value="NC_008253.1"/>
</dbReference>
<dbReference type="SMR" id="Q0TG03"/>
<dbReference type="KEGG" id="ecp:ECP_2127"/>
<dbReference type="HOGENOM" id="CLU_045532_1_1_6"/>
<dbReference type="Proteomes" id="UP000009182">
    <property type="component" value="Chromosome"/>
</dbReference>
<dbReference type="GO" id="GO:0005737">
    <property type="term" value="C:cytoplasm"/>
    <property type="evidence" value="ECO:0007669"/>
    <property type="project" value="UniProtKB-SubCell"/>
</dbReference>
<dbReference type="GO" id="GO:0005886">
    <property type="term" value="C:plasma membrane"/>
    <property type="evidence" value="ECO:0007669"/>
    <property type="project" value="TreeGrafter"/>
</dbReference>
<dbReference type="GO" id="GO:0005524">
    <property type="term" value="F:ATP binding"/>
    <property type="evidence" value="ECO:0007669"/>
    <property type="project" value="UniProtKB-UniRule"/>
</dbReference>
<dbReference type="GO" id="GO:0001727">
    <property type="term" value="F:lipid kinase activity"/>
    <property type="evidence" value="ECO:0007669"/>
    <property type="project" value="UniProtKB-UniRule"/>
</dbReference>
<dbReference type="GO" id="GO:0000287">
    <property type="term" value="F:magnesium ion binding"/>
    <property type="evidence" value="ECO:0007669"/>
    <property type="project" value="UniProtKB-UniRule"/>
</dbReference>
<dbReference type="GO" id="GO:0008654">
    <property type="term" value="P:phospholipid biosynthetic process"/>
    <property type="evidence" value="ECO:0007669"/>
    <property type="project" value="UniProtKB-UniRule"/>
</dbReference>
<dbReference type="FunFam" id="2.60.200.40:FF:000008">
    <property type="entry name" value="Probable lipid kinase YegS"/>
    <property type="match status" value="1"/>
</dbReference>
<dbReference type="FunFam" id="3.40.50.10330:FF:000008">
    <property type="entry name" value="Probable lipid kinase YegS"/>
    <property type="match status" value="1"/>
</dbReference>
<dbReference type="Gene3D" id="2.60.200.40">
    <property type="match status" value="1"/>
</dbReference>
<dbReference type="Gene3D" id="3.40.50.10330">
    <property type="entry name" value="Probable inorganic polyphosphate/atp-NAD kinase, domain 1"/>
    <property type="match status" value="1"/>
</dbReference>
<dbReference type="HAMAP" id="MF_01377">
    <property type="entry name" value="YegS"/>
    <property type="match status" value="1"/>
</dbReference>
<dbReference type="InterPro" id="IPR017438">
    <property type="entry name" value="ATP-NAD_kinase_N"/>
</dbReference>
<dbReference type="InterPro" id="IPR005218">
    <property type="entry name" value="Diacylglycerol/lipid_kinase"/>
</dbReference>
<dbReference type="InterPro" id="IPR001206">
    <property type="entry name" value="Diacylglycerol_kinase_cat_dom"/>
</dbReference>
<dbReference type="InterPro" id="IPR022433">
    <property type="entry name" value="Lip_kinase_YegS"/>
</dbReference>
<dbReference type="InterPro" id="IPR050187">
    <property type="entry name" value="Lipid_Phosphate_FormReg"/>
</dbReference>
<dbReference type="InterPro" id="IPR016064">
    <property type="entry name" value="NAD/diacylglycerol_kinase_sf"/>
</dbReference>
<dbReference type="InterPro" id="IPR045540">
    <property type="entry name" value="YegS/DAGK_C"/>
</dbReference>
<dbReference type="NCBIfam" id="TIGR03702">
    <property type="entry name" value="lip_kinase_YegS"/>
    <property type="match status" value="1"/>
</dbReference>
<dbReference type="NCBIfam" id="NF009602">
    <property type="entry name" value="PRK13054.1"/>
    <property type="match status" value="1"/>
</dbReference>
<dbReference type="NCBIfam" id="TIGR00147">
    <property type="entry name" value="YegS/Rv2252/BmrU family lipid kinase"/>
    <property type="match status" value="1"/>
</dbReference>
<dbReference type="PANTHER" id="PTHR12358:SF106">
    <property type="entry name" value="LIPID KINASE YEGS"/>
    <property type="match status" value="1"/>
</dbReference>
<dbReference type="PANTHER" id="PTHR12358">
    <property type="entry name" value="SPHINGOSINE KINASE"/>
    <property type="match status" value="1"/>
</dbReference>
<dbReference type="Pfam" id="PF00781">
    <property type="entry name" value="DAGK_cat"/>
    <property type="match status" value="1"/>
</dbReference>
<dbReference type="Pfam" id="PF19279">
    <property type="entry name" value="YegS_C"/>
    <property type="match status" value="1"/>
</dbReference>
<dbReference type="SMART" id="SM00046">
    <property type="entry name" value="DAGKc"/>
    <property type="match status" value="1"/>
</dbReference>
<dbReference type="SUPFAM" id="SSF111331">
    <property type="entry name" value="NAD kinase/diacylglycerol kinase-like"/>
    <property type="match status" value="1"/>
</dbReference>
<dbReference type="PROSITE" id="PS50146">
    <property type="entry name" value="DAGK"/>
    <property type="match status" value="1"/>
</dbReference>
<accession>Q0TG03</accession>
<reference key="1">
    <citation type="journal article" date="2006" name="Mol. Microbiol.">
        <title>Role of pathogenicity island-associated integrases in the genome plasticity of uropathogenic Escherichia coli strain 536.</title>
        <authorList>
            <person name="Hochhut B."/>
            <person name="Wilde C."/>
            <person name="Balling G."/>
            <person name="Middendorf B."/>
            <person name="Dobrindt U."/>
            <person name="Brzuszkiewicz E."/>
            <person name="Gottschalk G."/>
            <person name="Carniel E."/>
            <person name="Hacker J."/>
        </authorList>
    </citation>
    <scope>NUCLEOTIDE SEQUENCE [LARGE SCALE GENOMIC DNA]</scope>
    <source>
        <strain>536 / UPEC</strain>
    </source>
</reference>
<comment type="function">
    <text evidence="1">Probably phosphorylates lipids; the in vivo substrate is unknown.</text>
</comment>
<comment type="cofactor">
    <cofactor evidence="1">
        <name>Mg(2+)</name>
        <dbReference type="ChEBI" id="CHEBI:18420"/>
    </cofactor>
    <cofactor evidence="1">
        <name>Ca(2+)</name>
        <dbReference type="ChEBI" id="CHEBI:29108"/>
    </cofactor>
    <text evidence="1">Binds 1 Mg(2+) ion per subunit. Ca(2+) may be able to substitute.</text>
</comment>
<comment type="subcellular location">
    <subcellularLocation>
        <location evidence="1">Cytoplasm</location>
    </subcellularLocation>
</comment>
<comment type="similarity">
    <text evidence="1">Belongs to the diacylglycerol/lipid kinase family. YegS lipid kinase subfamily.</text>
</comment>
<gene>
    <name evidence="1" type="primary">yegS</name>
    <name type="ordered locus">ECP_2127</name>
</gene>
<name>YEGS_ECOL5</name>
<organism>
    <name type="scientific">Escherichia coli O6:K15:H31 (strain 536 / UPEC)</name>
    <dbReference type="NCBI Taxonomy" id="362663"/>
    <lineage>
        <taxon>Bacteria</taxon>
        <taxon>Pseudomonadati</taxon>
        <taxon>Pseudomonadota</taxon>
        <taxon>Gammaproteobacteria</taxon>
        <taxon>Enterobacterales</taxon>
        <taxon>Enterobacteriaceae</taxon>
        <taxon>Escherichia</taxon>
    </lineage>
</organism>
<keyword id="KW-0067">ATP-binding</keyword>
<keyword id="KW-0963">Cytoplasm</keyword>
<keyword id="KW-0418">Kinase</keyword>
<keyword id="KW-0444">Lipid biosynthesis</keyword>
<keyword id="KW-0443">Lipid metabolism</keyword>
<keyword id="KW-0460">Magnesium</keyword>
<keyword id="KW-0479">Metal-binding</keyword>
<keyword id="KW-0547">Nucleotide-binding</keyword>
<keyword id="KW-0594">Phospholipid biosynthesis</keyword>
<keyword id="KW-1208">Phospholipid metabolism</keyword>
<keyword id="KW-0808">Transferase</keyword>
<proteinExistence type="inferred from homology"/>
<evidence type="ECO:0000255" key="1">
    <source>
        <dbReference type="HAMAP-Rule" id="MF_01377"/>
    </source>
</evidence>
<feature type="chain" id="PRO_0000292146" description="Probable lipid kinase YegS">
    <location>
        <begin position="1"/>
        <end position="299"/>
    </location>
</feature>
<feature type="domain" description="DAGKc" evidence="1">
    <location>
        <begin position="2"/>
        <end position="133"/>
    </location>
</feature>
<feature type="active site" description="Proton acceptor" evidence="1">
    <location>
        <position position="271"/>
    </location>
</feature>
<feature type="binding site" evidence="1">
    <location>
        <position position="40"/>
    </location>
    <ligand>
        <name>ATP</name>
        <dbReference type="ChEBI" id="CHEBI:30616"/>
    </ligand>
</feature>
<feature type="binding site" evidence="1">
    <location>
        <begin position="66"/>
        <end position="72"/>
    </location>
    <ligand>
        <name>ATP</name>
        <dbReference type="ChEBI" id="CHEBI:30616"/>
    </ligand>
</feature>
<feature type="binding site" evidence="1">
    <location>
        <position position="95"/>
    </location>
    <ligand>
        <name>ATP</name>
        <dbReference type="ChEBI" id="CHEBI:30616"/>
    </ligand>
</feature>
<feature type="binding site" evidence="1">
    <location>
        <position position="215"/>
    </location>
    <ligand>
        <name>Mg(2+)</name>
        <dbReference type="ChEBI" id="CHEBI:18420"/>
    </ligand>
</feature>
<feature type="binding site" evidence="1">
    <location>
        <position position="218"/>
    </location>
    <ligand>
        <name>Mg(2+)</name>
        <dbReference type="ChEBI" id="CHEBI:18420"/>
    </ligand>
</feature>
<feature type="binding site" evidence="1">
    <location>
        <position position="220"/>
    </location>
    <ligand>
        <name>Mg(2+)</name>
        <dbReference type="ChEBI" id="CHEBI:18420"/>
    </ligand>
</feature>
<protein>
    <recommendedName>
        <fullName evidence="1">Probable lipid kinase YegS</fullName>
        <ecNumber evidence="1">2.7.1.-</ecNumber>
    </recommendedName>
</protein>
<sequence>MAEFPASLLILNGKSTDNLPLREAIMLLREEGMTIHVRITWEKGDAARFVEEARKLGVATVIAGGGDGTINEVSTALIQCEGDDIPALGILPLGTANDFATSVGIPEALDKALKLAIAGNAIAIDMAQVNKQTCFINMATGGFGTRITTETPEKLKAALGGVSYIIHGLMRMDTLQPDRCEIRGENFHWQGDALVIGIGNGRQAGGGQQLCPNALINDGLLQLRIFTGDEIIPTLVSTLKSDEDNPNIIEGASSWFDIQAPHEITFNLDGEPLSGQNFHIEILPAALRCRLPPDCPLLR</sequence>